<reference key="1">
    <citation type="journal article" date="2008" name="Fungal Genet. Biol.">
        <title>Characterization of the atromentin biosynthesis genes and enzymes in the homobasidiomycete Tapinella panuoides.</title>
        <authorList>
            <person name="Schneider P."/>
            <person name="Bouhired S."/>
            <person name="Hoffmeister D."/>
        </authorList>
    </citation>
    <scope>NUCLEOTIDE SEQUENCE [GENOMIC DNA]</scope>
    <scope>FUNCTION</scope>
    <scope>BIOPHYSICOCHEMICAL PROPERTIES</scope>
    <scope>CATALYTIC ACTIVITY</scope>
</reference>
<reference key="2">
    <citation type="journal article" date="1965" name="J. Pharm. Sci.">
        <title>Atromentin, anticoagulant from Hydnellum diabolus.</title>
        <authorList>
            <person name="Khanna J.M."/>
            <person name="Malone M.H."/>
            <person name="Euler K.L."/>
            <person name="Brady L.R."/>
        </authorList>
    </citation>
    <scope>BIOTECHNOLOGY</scope>
</reference>
<reference key="3">
    <citation type="journal article" date="1984" name="Can. J. Microbiol.">
        <title>The antibacterial activity of some naturally occurring 2,5-dihydroxy-1,4-benzoquinones.</title>
        <authorList>
            <person name="Brewer D."/>
            <person name="Jen W.C."/>
            <person name="Jones G.A."/>
            <person name="Taylor A."/>
        </authorList>
    </citation>
    <scope>BIOTECHNOLOGY</scope>
</reference>
<reference key="4">
    <citation type="journal article" date="2006" name="J. Antibiot.">
        <title>Atromentin and leucomelone, the first inhibitors specific to enoyl-ACP reductase (FabK) of Streptococcus pneumoniae.</title>
        <authorList>
            <person name="Zheng C.J."/>
            <person name="Sohn M.J."/>
            <person name="Kim W.G."/>
        </authorList>
    </citation>
    <scope>BIOTECHNOLOGY</scope>
</reference>
<reference key="5">
    <citation type="journal article" date="2009" name="J. Microbiol. Biotechnol.">
        <title>Atromentin-induced apoptosis in human leukemia U937 cells.</title>
        <authorList>
            <person name="Kim J.H."/>
            <person name="Lee C.H."/>
        </authorList>
    </citation>
    <scope>BIOTECHNOLOGY</scope>
</reference>
<name>ATRD_TAPPA</name>
<protein>
    <recommendedName>
        <fullName evidence="8">L-tyrosine:2-oxoglutarate aminotransferase atrD</fullName>
        <ecNumber evidence="4">2.6.1.5</ecNumber>
    </recommendedName>
    <alternativeName>
        <fullName evidence="9">Atromentin biosynthesis protein D</fullName>
    </alternativeName>
</protein>
<proteinExistence type="evidence at protein level"/>
<dbReference type="EC" id="2.6.1.5" evidence="4"/>
<dbReference type="EMBL" id="EU711406">
    <property type="protein sequence ID" value="ACH90387.1"/>
    <property type="molecule type" value="Genomic_DNA"/>
</dbReference>
<dbReference type="SMR" id="B7STY2"/>
<dbReference type="BioCyc" id="MetaCyc:MONOMER-18721"/>
<dbReference type="GO" id="GO:0004838">
    <property type="term" value="F:L-tyrosine-2-oxoglutarate transaminase activity"/>
    <property type="evidence" value="ECO:0007669"/>
    <property type="project" value="RHEA"/>
</dbReference>
<dbReference type="GO" id="GO:0030170">
    <property type="term" value="F:pyridoxal phosphate binding"/>
    <property type="evidence" value="ECO:0007669"/>
    <property type="project" value="InterPro"/>
</dbReference>
<dbReference type="GO" id="GO:1901605">
    <property type="term" value="P:alpha-amino acid metabolic process"/>
    <property type="evidence" value="ECO:0007669"/>
    <property type="project" value="TreeGrafter"/>
</dbReference>
<dbReference type="GO" id="GO:0009058">
    <property type="term" value="P:biosynthetic process"/>
    <property type="evidence" value="ECO:0007669"/>
    <property type="project" value="InterPro"/>
</dbReference>
<dbReference type="CDD" id="cd00609">
    <property type="entry name" value="AAT_like"/>
    <property type="match status" value="1"/>
</dbReference>
<dbReference type="Gene3D" id="3.40.640.10">
    <property type="entry name" value="Type I PLP-dependent aspartate aminotransferase-like (Major domain)"/>
    <property type="match status" value="1"/>
</dbReference>
<dbReference type="InterPro" id="IPR004839">
    <property type="entry name" value="Aminotransferase_I/II_large"/>
</dbReference>
<dbReference type="InterPro" id="IPR050859">
    <property type="entry name" value="Class-I_PLP-dep_aminotransf"/>
</dbReference>
<dbReference type="InterPro" id="IPR015424">
    <property type="entry name" value="PyrdxlP-dep_Trfase"/>
</dbReference>
<dbReference type="InterPro" id="IPR015421">
    <property type="entry name" value="PyrdxlP-dep_Trfase_major"/>
</dbReference>
<dbReference type="PANTHER" id="PTHR42790">
    <property type="entry name" value="AMINOTRANSFERASE"/>
    <property type="match status" value="1"/>
</dbReference>
<dbReference type="PANTHER" id="PTHR42790:SF1">
    <property type="entry name" value="AROMATIC AMINO ACID AMINOTRANSFERASE, HYPOTHETICAL (EUROFUNG)"/>
    <property type="match status" value="1"/>
</dbReference>
<dbReference type="Pfam" id="PF00155">
    <property type="entry name" value="Aminotran_1_2"/>
    <property type="match status" value="1"/>
</dbReference>
<dbReference type="SUPFAM" id="SSF53383">
    <property type="entry name" value="PLP-dependent transferases"/>
    <property type="match status" value="1"/>
</dbReference>
<feature type="chain" id="PRO_0000437679" description="L-tyrosine:2-oxoglutarate aminotransferase atrD">
    <location>
        <begin position="1"/>
        <end position="524"/>
    </location>
</feature>
<organism>
    <name type="scientific">Tapinella panuoides</name>
    <name type="common">Oyster rollrim mushroom</name>
    <name type="synonym">Paxillus panuoides</name>
    <dbReference type="NCBI Taxonomy" id="80604"/>
    <lineage>
        <taxon>Eukaryota</taxon>
        <taxon>Fungi</taxon>
        <taxon>Dikarya</taxon>
        <taxon>Basidiomycota</taxon>
        <taxon>Agaricomycotina</taxon>
        <taxon>Agaricomycetes</taxon>
        <taxon>Agaricomycetidae</taxon>
        <taxon>Boletales</taxon>
        <taxon>Tapinellineae</taxon>
        <taxon>Tapinellaceae</taxon>
        <taxon>Tapinella</taxon>
    </lineage>
</organism>
<evidence type="ECO:0000250" key="1">
    <source>
        <dbReference type="UniProtKB" id="P00509"/>
    </source>
</evidence>
<evidence type="ECO:0000255" key="2"/>
<evidence type="ECO:0000269" key="3">
    <source>
    </source>
</evidence>
<evidence type="ECO:0000269" key="4">
    <source>
    </source>
</evidence>
<evidence type="ECO:0000269" key="5">
    <source>
    </source>
</evidence>
<evidence type="ECO:0000269" key="6">
    <source>
    </source>
</evidence>
<evidence type="ECO:0000269" key="7">
    <source>
    </source>
</evidence>
<evidence type="ECO:0000303" key="8">
    <source>
    </source>
</evidence>
<evidence type="ECO:0000305" key="9"/>
<accession>B7STY2</accession>
<keyword id="KW-0032">Aminotransferase</keyword>
<keyword id="KW-0663">Pyridoxal phosphate</keyword>
<keyword id="KW-0808">Transferase</keyword>
<sequence length="524" mass="57619">MPVAVESAIPYPTPRKVDLAHHLSTEARIRQPNPIKSVWKAAQVRPGIINMGNGDPHHTLYPISSMNFIVPSLEGDHPVEAWRTGTSKTLVLSSHKDAPSTLSLRTAFAYGAGAGLPAVREALADLGARIHAPPNHTVCLSLGNADALTKCFRLFGDPDDSFLCEEFTFSAMTNAALALGIRWVPVRVDGGGLLPEDLERVMRCWDEKKQGKRPHVLYTVPCSQNPTGSTISLERRRRIYEVAHIYDIIIIEDDPYYFLQYDLQINQNTLKEHGYTRAMSEVLPRSFLSMDIDGRVVRLDSFSKVLAPGIRLGWITSSPFFADKLDMLTDSSTQHPHGLGQAYLAELLGPTGWGADGLMKWVHSLAREYERRRDLFVSVFDAKVAPTGCASAEVPQSGMFVWIQVHLETHPRFVVRTPDSGSDDEGDVLGAVMAAPGVLGEVARGGPITNTEQLMSELLRKLVESGVIMIPASTFAIVDRSGSTLSPIGDRANYLRATFVGTDETIRDGLTIFAQALEEFFNLK</sequence>
<gene>
    <name evidence="8" type="primary">atrD</name>
</gene>
<comment type="function">
    <text evidence="4">The L-tyrosine:2-oxoglutarate aminotransferase atrD and the atromentin synthetase atrA catalyze consecutive steps to turn over L-tyrosine into atromentin, which represents the generic precursor molecule for the entire terphenylquinone and pulvinic acid family of pigments, which are widely distributed secondary metabolites in homobasidiomycetes (PubMed:18805498). The first step is catalyzed by atrD which converts L-tyrosine in to 4-hydroxyphenylpyruvate (4-HPP) (PubMed:18805498). Adenylation of two 4-HPP monomers by the atrA adenylation (A) domain, ester bond formation between monomers and atrA, and symmetric C-C-bond formation between two monomers by atrA leads to atromentin (PubMed:18805498).</text>
</comment>
<comment type="catalytic activity">
    <reaction evidence="4">
        <text>L-tyrosine + 2-oxoglutarate = 3-(4-hydroxyphenyl)pyruvate + L-glutamate</text>
        <dbReference type="Rhea" id="RHEA:15093"/>
        <dbReference type="ChEBI" id="CHEBI:16810"/>
        <dbReference type="ChEBI" id="CHEBI:29985"/>
        <dbReference type="ChEBI" id="CHEBI:36242"/>
        <dbReference type="ChEBI" id="CHEBI:58315"/>
        <dbReference type="EC" id="2.6.1.5"/>
    </reaction>
</comment>
<comment type="cofactor">
    <cofactor evidence="1">
        <name>pyridoxal 5'-phosphate</name>
        <dbReference type="ChEBI" id="CHEBI:597326"/>
    </cofactor>
</comment>
<comment type="biophysicochemical properties">
    <kinetics>
        <KM evidence="4">291 uM for L-tyrosine</KM>
        <KM evidence="4">590 uM for 2-oxoglutarate</KM>
    </kinetics>
    <phDependence>
        <text evidence="4">Optimum pH is 9.0.</text>
    </phDependence>
    <temperatureDependence>
        <text evidence="4">Optimum temperature is 37 degrees Celsius.</text>
    </temperatureDependence>
</comment>
<comment type="pathway">
    <text evidence="4">Secondary metabolite biosynthesis.</text>
</comment>
<comment type="biotechnology">
    <text evidence="3 5 6 7">Atromentin has been shown to induce caspase-3 and poly (ADP-ribose) polymerase (PARP) in human leukemia U937 cells (PubMed:19809251). It also has anticoagulant activity (PubMed:5862512). Moreover, atromentin has antimicrobial activity (PubMed:6541963). It acts especially as an inhibitor of FabK, the enoyl-acyl carrier protein (ACP) reductase of S.pneumoniae (PubMed:17323650).</text>
</comment>
<comment type="similarity">
    <text evidence="2">Belongs to the class-I pyridoxal-phosphate-dependent aminotransferase family.</text>
</comment>